<feature type="chain" id="PRO_0000247314" description="Cholecystokinin receptor type A">
    <location>
        <begin position="1"/>
        <end position="428"/>
    </location>
</feature>
<feature type="topological domain" description="Extracellular" evidence="2">
    <location>
        <begin position="1"/>
        <end position="41"/>
    </location>
</feature>
<feature type="transmembrane region" description="Helical; Name=1" evidence="2">
    <location>
        <begin position="42"/>
        <end position="67"/>
    </location>
</feature>
<feature type="topological domain" description="Cytoplasmic" evidence="2">
    <location>
        <begin position="68"/>
        <end position="77"/>
    </location>
</feature>
<feature type="transmembrane region" description="Helical; Name=2" evidence="2">
    <location>
        <begin position="78"/>
        <end position="104"/>
    </location>
</feature>
<feature type="topological domain" description="Extracellular" evidence="2">
    <location>
        <begin position="105"/>
        <end position="115"/>
    </location>
</feature>
<feature type="transmembrane region" description="Helical; Name=3" evidence="2">
    <location>
        <begin position="116"/>
        <end position="137"/>
    </location>
</feature>
<feature type="topological domain" description="Cytoplasmic" evidence="2">
    <location>
        <begin position="138"/>
        <end position="157"/>
    </location>
</feature>
<feature type="transmembrane region" description="Helical; Name=4" evidence="2">
    <location>
        <begin position="158"/>
        <end position="178"/>
    </location>
</feature>
<feature type="topological domain" description="Extracellular" evidence="2">
    <location>
        <begin position="179"/>
        <end position="210"/>
    </location>
</feature>
<feature type="transmembrane region" description="Helical; Name=5" evidence="2">
    <location>
        <begin position="211"/>
        <end position="234"/>
    </location>
</feature>
<feature type="topological domain" description="Cytoplasmic" evidence="2">
    <location>
        <begin position="235"/>
        <end position="313"/>
    </location>
</feature>
<feature type="transmembrane region" description="Helical; Name=6" evidence="2">
    <location>
        <begin position="314"/>
        <end position="334"/>
    </location>
</feature>
<feature type="topological domain" description="Extracellular" evidence="2">
    <location>
        <begin position="335"/>
        <end position="349"/>
    </location>
</feature>
<feature type="transmembrane region" description="Helical; Name=7" evidence="2">
    <location>
        <begin position="350"/>
        <end position="373"/>
    </location>
</feature>
<feature type="topological domain" description="Cytoplasmic" evidence="2">
    <location>
        <begin position="374"/>
        <end position="428"/>
    </location>
</feature>
<feature type="region of interest" description="Disordered" evidence="4">
    <location>
        <begin position="250"/>
        <end position="269"/>
    </location>
</feature>
<feature type="region of interest" description="Disordered" evidence="4">
    <location>
        <begin position="393"/>
        <end position="428"/>
    </location>
</feature>
<feature type="compositionally biased region" description="Polar residues" evidence="4">
    <location>
        <begin position="409"/>
        <end position="422"/>
    </location>
</feature>
<feature type="lipid moiety-binding region" description="S-palmitoyl cysteine" evidence="1">
    <location>
        <position position="387"/>
    </location>
</feature>
<feature type="glycosylation site" description="N-linked (GlcNAc...) asparagine" evidence="2">
    <location>
        <position position="10"/>
    </location>
</feature>
<feature type="glycosylation site" description="N-linked (GlcNAc...) asparagine" evidence="2">
    <location>
        <position position="24"/>
    </location>
</feature>
<feature type="glycosylation site" description="N-linked (GlcNAc...) asparagine" evidence="2">
    <location>
        <position position="190"/>
    </location>
</feature>
<feature type="disulfide bond" evidence="3">
    <location>
        <begin position="18"/>
        <end position="29"/>
    </location>
</feature>
<feature type="disulfide bond" evidence="3">
    <location>
        <begin position="114"/>
        <end position="196"/>
    </location>
</feature>
<evidence type="ECO:0000250" key="1"/>
<evidence type="ECO:0000255" key="2"/>
<evidence type="ECO:0000255" key="3">
    <source>
        <dbReference type="PROSITE-ProRule" id="PRU00521"/>
    </source>
</evidence>
<evidence type="ECO:0000256" key="4">
    <source>
        <dbReference type="SAM" id="MobiDB-lite"/>
    </source>
</evidence>
<dbReference type="EMBL" id="AY934643">
    <property type="protein sequence ID" value="AAX12114.1"/>
    <property type="molecule type" value="mRNA"/>
</dbReference>
<dbReference type="RefSeq" id="NP_001012664.1">
    <property type="nucleotide sequence ID" value="NM_001012646.2"/>
</dbReference>
<dbReference type="SMR" id="Q5D0K2"/>
<dbReference type="FunCoup" id="Q5D0K2">
    <property type="interactions" value="51"/>
</dbReference>
<dbReference type="STRING" id="9615.ENSCAFP00000059499"/>
<dbReference type="GlyCosmos" id="Q5D0K2">
    <property type="glycosylation" value="3 sites, No reported glycans"/>
</dbReference>
<dbReference type="PaxDb" id="9612-ENSCAFP00000036103"/>
<dbReference type="GeneID" id="488846"/>
<dbReference type="KEGG" id="cfa:488846"/>
<dbReference type="CTD" id="886"/>
<dbReference type="eggNOG" id="KOG3656">
    <property type="taxonomic scope" value="Eukaryota"/>
</dbReference>
<dbReference type="HOGENOM" id="CLU_009579_6_3_1"/>
<dbReference type="InParanoid" id="Q5D0K2"/>
<dbReference type="OMA" id="NIAPPCE"/>
<dbReference type="OrthoDB" id="5987936at2759"/>
<dbReference type="TreeFam" id="TF315303"/>
<dbReference type="Proteomes" id="UP000002254">
    <property type="component" value="Chromosome 3"/>
</dbReference>
<dbReference type="Proteomes" id="UP000694429">
    <property type="component" value="Unplaced"/>
</dbReference>
<dbReference type="Proteomes" id="UP000694542">
    <property type="component" value="Unplaced"/>
</dbReference>
<dbReference type="Proteomes" id="UP000805418">
    <property type="component" value="Unplaced"/>
</dbReference>
<dbReference type="Bgee" id="ENSCAFG00000029430">
    <property type="expression patterns" value="Expressed in pancreas and 12 other cell types or tissues"/>
</dbReference>
<dbReference type="GO" id="GO:0005886">
    <property type="term" value="C:plasma membrane"/>
    <property type="evidence" value="ECO:0000318"/>
    <property type="project" value="GO_Central"/>
</dbReference>
<dbReference type="GO" id="GO:0004951">
    <property type="term" value="F:cholecystokinin receptor activity"/>
    <property type="evidence" value="ECO:0000318"/>
    <property type="project" value="GO_Central"/>
</dbReference>
<dbReference type="GO" id="GO:0032870">
    <property type="term" value="P:cellular response to hormone stimulus"/>
    <property type="evidence" value="ECO:0000318"/>
    <property type="project" value="GO_Central"/>
</dbReference>
<dbReference type="GO" id="GO:0007186">
    <property type="term" value="P:G protein-coupled receptor signaling pathway"/>
    <property type="evidence" value="ECO:0000318"/>
    <property type="project" value="GO_Central"/>
</dbReference>
<dbReference type="GO" id="GO:0046883">
    <property type="term" value="P:regulation of hormone secretion"/>
    <property type="evidence" value="ECO:0000318"/>
    <property type="project" value="GO_Central"/>
</dbReference>
<dbReference type="CDD" id="cd15978">
    <property type="entry name" value="7tmA_CCK-AR"/>
    <property type="match status" value="1"/>
</dbReference>
<dbReference type="FunFam" id="1.20.1070.10:FF:000168">
    <property type="entry name" value="Cholecystokinin receptor type A"/>
    <property type="match status" value="1"/>
</dbReference>
<dbReference type="FunFam" id="1.20.1070.10:FF:000254">
    <property type="entry name" value="Cholecystokinin receptor type A"/>
    <property type="match status" value="1"/>
</dbReference>
<dbReference type="FunFam" id="4.10.670.10:FF:000001">
    <property type="entry name" value="cholecystokinin receptor type A"/>
    <property type="match status" value="1"/>
</dbReference>
<dbReference type="Gene3D" id="4.10.670.10">
    <property type="entry name" value="Cholecystokinin A receptor, N-terminal domain"/>
    <property type="match status" value="1"/>
</dbReference>
<dbReference type="Gene3D" id="1.20.1070.10">
    <property type="entry name" value="Rhodopsin 7-helix transmembrane proteins"/>
    <property type="match status" value="2"/>
</dbReference>
<dbReference type="InterPro" id="IPR009126">
    <property type="entry name" value="Cholcskin_rcpt"/>
</dbReference>
<dbReference type="InterPro" id="IPR000596">
    <property type="entry name" value="Cholcy_rcpt_A"/>
</dbReference>
<dbReference type="InterPro" id="IPR015276">
    <property type="entry name" value="CholecystokininA_recpt_N"/>
</dbReference>
<dbReference type="InterPro" id="IPR036472">
    <property type="entry name" value="CholecystokininA_recpt_N_sf"/>
</dbReference>
<dbReference type="InterPro" id="IPR000276">
    <property type="entry name" value="GPCR_Rhodpsn"/>
</dbReference>
<dbReference type="InterPro" id="IPR017452">
    <property type="entry name" value="GPCR_Rhodpsn_7TM"/>
</dbReference>
<dbReference type="PANTHER" id="PTHR24238:SF81">
    <property type="entry name" value="CHOLECYSTOKININ RECEPTOR TYPE A"/>
    <property type="match status" value="1"/>
</dbReference>
<dbReference type="PANTHER" id="PTHR24238">
    <property type="entry name" value="G-PROTEIN COUPLED RECEPTOR"/>
    <property type="match status" value="1"/>
</dbReference>
<dbReference type="Pfam" id="PF00001">
    <property type="entry name" value="7tm_1"/>
    <property type="match status" value="1"/>
</dbReference>
<dbReference type="Pfam" id="PF09193">
    <property type="entry name" value="CholecysA-Rec_N"/>
    <property type="match status" value="1"/>
</dbReference>
<dbReference type="PRINTS" id="PR01822">
    <property type="entry name" value="CCYSTOKININR"/>
</dbReference>
<dbReference type="PRINTS" id="PR00524">
    <property type="entry name" value="CCYSTOKNINAR"/>
</dbReference>
<dbReference type="PRINTS" id="PR00237">
    <property type="entry name" value="GPCRRHODOPSN"/>
</dbReference>
<dbReference type="SMART" id="SM01381">
    <property type="entry name" value="7TM_GPCR_Srsx"/>
    <property type="match status" value="1"/>
</dbReference>
<dbReference type="SUPFAM" id="SSF81321">
    <property type="entry name" value="Family A G protein-coupled receptor-like"/>
    <property type="match status" value="1"/>
</dbReference>
<dbReference type="PROSITE" id="PS00237">
    <property type="entry name" value="G_PROTEIN_RECEP_F1_1"/>
    <property type="match status" value="1"/>
</dbReference>
<dbReference type="PROSITE" id="PS50262">
    <property type="entry name" value="G_PROTEIN_RECEP_F1_2"/>
    <property type="match status" value="1"/>
</dbReference>
<reference key="1">
    <citation type="journal article" date="2005" name="Br. J. Pharmacol.">
        <title>Molecular cloning, expression and pharmacological characterization of the canine cholecystokinin 1 receptor.</title>
        <authorList>
            <person name="Morton M.F."/>
            <person name="Pyati J."/>
            <person name="Dai H."/>
            <person name="Li L."/>
            <person name="Moreno V."/>
            <person name="Shankley N.P."/>
        </authorList>
    </citation>
    <scope>NUCLEOTIDE SEQUENCE [MRNA]</scope>
    <source>
        <tissue>Gall bladder</tissue>
    </source>
</reference>
<gene>
    <name type="primary">CCKAR</name>
</gene>
<organism>
    <name type="scientific">Canis lupus familiaris</name>
    <name type="common">Dog</name>
    <name type="synonym">Canis familiaris</name>
    <dbReference type="NCBI Taxonomy" id="9615"/>
    <lineage>
        <taxon>Eukaryota</taxon>
        <taxon>Metazoa</taxon>
        <taxon>Chordata</taxon>
        <taxon>Craniata</taxon>
        <taxon>Vertebrata</taxon>
        <taxon>Euteleostomi</taxon>
        <taxon>Mammalia</taxon>
        <taxon>Eutheria</taxon>
        <taxon>Laurasiatheria</taxon>
        <taxon>Carnivora</taxon>
        <taxon>Caniformia</taxon>
        <taxon>Canidae</taxon>
        <taxon>Canis</taxon>
    </lineage>
</organism>
<protein>
    <recommendedName>
        <fullName>Cholecystokinin receptor type A</fullName>
        <shortName>CCK-A receptor</shortName>
        <shortName>CCK-AR</shortName>
    </recommendedName>
    <alternativeName>
        <fullName>Cholecystokinin-1 receptor</fullName>
        <shortName>CCK1-R</shortName>
    </alternativeName>
</protein>
<accession>Q5D0K2</accession>
<comment type="function">
    <text evidence="1">Receptor for cholecystokinin. Mediates pancreatic growth and enzyme secretion, smooth muscle contraction of the gall bladder and stomach. Has a 1000-fold higher affinity for CCK rather than for gastrin. It modulates feeding and dopamine-induced behavior in the central and peripheral nervous system. This receptor mediates its action by association with G proteins that activate a phosphatidylinositol-calcium second messenger system (By similarity).</text>
</comment>
<comment type="subcellular location">
    <subcellularLocation>
        <location>Cell membrane</location>
        <topology>Multi-pass membrane protein</topology>
    </subcellularLocation>
</comment>
<comment type="similarity">
    <text evidence="3">Belongs to the G-protein coupled receptor 1 family.</text>
</comment>
<proteinExistence type="evidence at transcript level"/>
<name>CCKAR_CANLF</name>
<sequence length="428" mass="47836">MEVADSLLGNGSDVPPPCELGLENETLVCLEQPRAAKEWQPAVQILLYSLIFLLSVLGNTLVITVLIRNKRMRTVTNIFLLSLAVSDLMLCLFCMPFNLIPNLLKDFIFGSAVCKTTTYFMGTSVSVSTFNLVAISLERYGAICKPLQSRVWQTKSHALKVIATTWCLSFTIMTPYPIYSNLVPFTKTNNQTANMCRFLLPNDVMQQSWHTFLLLILFLIPGIVMMVAYGLISLELYQGIKFDAIQKKSARDRNPSTGSSGRYEDGDGCYLQKARPRRRLELRQLSTPGSGRLNRIRSTSSTANLMAKKRVIRMLMVIVVLFFLCWMPIFSANAWRAYDTASAERRLSGTPISFILLLSYTSSCVNPIIYCFMNKRFRLGFLATFPCCPHPGPPGPRGEVGEEEEGRTTGASLSRYSYSHMSASAPGP</sequence>
<keyword id="KW-1003">Cell membrane</keyword>
<keyword id="KW-1015">Disulfide bond</keyword>
<keyword id="KW-0297">G-protein coupled receptor</keyword>
<keyword id="KW-0325">Glycoprotein</keyword>
<keyword id="KW-0449">Lipoprotein</keyword>
<keyword id="KW-0472">Membrane</keyword>
<keyword id="KW-0564">Palmitate</keyword>
<keyword id="KW-0675">Receptor</keyword>
<keyword id="KW-1185">Reference proteome</keyword>
<keyword id="KW-0807">Transducer</keyword>
<keyword id="KW-0812">Transmembrane</keyword>
<keyword id="KW-1133">Transmembrane helix</keyword>